<sequence length="265" mass="28504">MKVLLLKDAKEDDSGLDPYIQELRLCGLEATLIPVLSFEFMSLPSLSEKLSHPEGFGGLIFTSPRAVEAVKLCLEKDNKTEAWEKSLKDRWNAKSVYVVGSATASLVNKIGLDAEGAGSGNAEKLAEYICSKPSSELPLLFPCGTIKGDTLPKMLKDKGIPMESMHVYQTVPHPGIQGSLKSYYEDQGIPASITFFSPSGLKYSLEYIQALSGSSFDQIKFIAIGPSTTRAMAAKGLPVSCTAESPTPQALAAGIRNVLKPNHCC</sequence>
<evidence type="ECO:0000250" key="1">
    <source>
        <dbReference type="UniProtKB" id="P10746"/>
    </source>
</evidence>
<evidence type="ECO:0000269" key="2">
    <source>
    </source>
</evidence>
<evidence type="ECO:0000269" key="3">
    <source>
    </source>
</evidence>
<evidence type="ECO:0000305" key="4"/>
<evidence type="ECO:0000305" key="5">
    <source>
    </source>
</evidence>
<organism>
    <name type="scientific">Mus musculus</name>
    <name type="common">Mouse</name>
    <dbReference type="NCBI Taxonomy" id="10090"/>
    <lineage>
        <taxon>Eukaryota</taxon>
        <taxon>Metazoa</taxon>
        <taxon>Chordata</taxon>
        <taxon>Craniata</taxon>
        <taxon>Vertebrata</taxon>
        <taxon>Euteleostomi</taxon>
        <taxon>Mammalia</taxon>
        <taxon>Eutheria</taxon>
        <taxon>Euarchontoglires</taxon>
        <taxon>Glires</taxon>
        <taxon>Rodentia</taxon>
        <taxon>Myomorpha</taxon>
        <taxon>Muroidea</taxon>
        <taxon>Muridae</taxon>
        <taxon>Murinae</taxon>
        <taxon>Mus</taxon>
        <taxon>Mus</taxon>
    </lineage>
</organism>
<reference key="1">
    <citation type="journal article" date="1995" name="Genomics">
        <title>Uroporphyrinogen-III synthase: molecular cloning, nucleotide sequence, expression of a mouse full-length cDNA, and its localization on mouse chromosome 7.</title>
        <authorList>
            <person name="Xu W."/>
            <person name="Kozak C.A."/>
            <person name="Desnick R.J."/>
        </authorList>
    </citation>
    <scope>NUCLEOTIDE SEQUENCE [MRNA]</scope>
    <scope>FUNCTION</scope>
    <scope>CATALYTIC ACTIVITY</scope>
    <scope>PATHWAY</scope>
    <source>
        <strain>C57BL/6 X CBA</strain>
        <tissue>Liver</tissue>
    </source>
</reference>
<reference key="2">
    <citation type="journal article" date="1994" name="Mamm. Genome">
        <title>The cDNA sequence of mouse uroporphyrinogen III synthase and assignment to mouse chromosome 7.</title>
        <authorList>
            <person name="Bensidhoum M."/>
            <person name="Ged C.M."/>
            <person name="Poirier C."/>
            <person name="Guenet J.-L."/>
            <person name="de Verneuil H."/>
        </authorList>
    </citation>
    <scope>NUCLEOTIDE SEQUENCE [MRNA]</scope>
</reference>
<reference key="3">
    <citation type="journal article" date="2004" name="Genome Res.">
        <title>The status, quality, and expansion of the NIH full-length cDNA project: the Mammalian Gene Collection (MGC).</title>
        <authorList>
            <consortium name="The MGC Project Team"/>
        </authorList>
    </citation>
    <scope>NUCLEOTIDE SEQUENCE [LARGE SCALE MRNA]</scope>
    <source>
        <strain>C57BL/6J</strain>
        <tissue>Brain</tissue>
    </source>
</reference>
<reference key="4">
    <citation type="journal article" date="2010" name="Cell">
        <title>A tissue-specific atlas of mouse protein phosphorylation and expression.</title>
        <authorList>
            <person name="Huttlin E.L."/>
            <person name="Jedrychowski M.P."/>
            <person name="Elias J.E."/>
            <person name="Goswami T."/>
            <person name="Rad R."/>
            <person name="Beausoleil S.A."/>
            <person name="Villen J."/>
            <person name="Haas W."/>
            <person name="Sowa M.E."/>
            <person name="Gygi S.P."/>
        </authorList>
    </citation>
    <scope>IDENTIFICATION BY MASS SPECTROMETRY [LARGE SCALE ANALYSIS]</scope>
    <source>
        <tissue>Brain</tissue>
        <tissue>Brown adipose tissue</tissue>
        <tissue>Heart</tissue>
        <tissue>Kidney</tissue>
        <tissue>Liver</tissue>
        <tissue>Lung</tissue>
        <tissue>Spleen</tissue>
        <tissue>Testis</tissue>
    </source>
</reference>
<reference key="5">
    <citation type="journal article" date="2013" name="Proc. Natl. Acad. Sci. U.S.A.">
        <title>Therapeutic potential of proteasome inhibitors in congenital erythropoietic porphyria.</title>
        <authorList>
            <person name="Blouin J.M."/>
            <person name="Duchartre Y."/>
            <person name="Costet P."/>
            <person name="Lalanne M."/>
            <person name="Ged C."/>
            <person name="Lain A."/>
            <person name="Millet O."/>
            <person name="de Verneuil H."/>
            <person name="Richard E."/>
        </authorList>
    </citation>
    <scope>SUBCELLULAR LOCATION</scope>
    <scope>MUTAGENESIS OF CYS-73 AND PRO-248</scope>
</reference>
<comment type="function">
    <text evidence="1 3">Catalyzes cyclization of the linear tetrapyrrole, hydroxymethylbilane, to the macrocyclic uroporphyrinogen III, the branch point for the various sub-pathways leading to the wide diversity of porphyrins (PubMed:7607680). Porphyrins act as cofactors for a multitude of enzymes that perform a variety of processes within the cell such as methionine synthesis (vitamin B12) or oxygen transport (heme) (By similarity).</text>
</comment>
<comment type="catalytic activity">
    <reaction evidence="5">
        <text>hydroxymethylbilane = uroporphyrinogen III + H2O</text>
        <dbReference type="Rhea" id="RHEA:18965"/>
        <dbReference type="ChEBI" id="CHEBI:15377"/>
        <dbReference type="ChEBI" id="CHEBI:57308"/>
        <dbReference type="ChEBI" id="CHEBI:57845"/>
        <dbReference type="EC" id="4.2.1.75"/>
    </reaction>
</comment>
<comment type="pathway">
    <text evidence="5">Porphyrin-containing compound metabolism; protoporphyrin-IX biosynthesis; coproporphyrinogen-III from 5-aminolevulinate: step 3/4.</text>
</comment>
<comment type="subunit">
    <text evidence="1">Monomer.</text>
</comment>
<comment type="subcellular location">
    <subcellularLocation>
        <location evidence="2">Cytoplasm</location>
        <location evidence="2">Cytosol</location>
    </subcellularLocation>
</comment>
<comment type="similarity">
    <text evidence="4">Belongs to the uroporphyrinogen-III synthase family.</text>
</comment>
<dbReference type="EC" id="4.2.1.75" evidence="5"/>
<dbReference type="EMBL" id="U18867">
    <property type="protein sequence ID" value="AAA74742.1"/>
    <property type="molecule type" value="mRNA"/>
</dbReference>
<dbReference type="EMBL" id="U16216">
    <property type="protein sequence ID" value="AAA79978.1"/>
    <property type="molecule type" value="mRNA"/>
</dbReference>
<dbReference type="EMBL" id="U04439">
    <property type="protein sequence ID" value="AAA81898.1"/>
    <property type="molecule type" value="mRNA"/>
</dbReference>
<dbReference type="EMBL" id="BC068161">
    <property type="protein sequence ID" value="AAH68161.1"/>
    <property type="molecule type" value="mRNA"/>
</dbReference>
<dbReference type="CCDS" id="CCDS21934.1"/>
<dbReference type="PIR" id="A56838">
    <property type="entry name" value="A56838"/>
</dbReference>
<dbReference type="RefSeq" id="NP_001289014.1">
    <property type="nucleotide sequence ID" value="NM_001302085.1"/>
</dbReference>
<dbReference type="RefSeq" id="NP_001289016.1">
    <property type="nucleotide sequence ID" value="NM_001302087.1"/>
</dbReference>
<dbReference type="RefSeq" id="NP_001347093.1">
    <property type="nucleotide sequence ID" value="NM_001360164.1"/>
</dbReference>
<dbReference type="RefSeq" id="NP_033505.1">
    <property type="nucleotide sequence ID" value="NM_009479.3"/>
</dbReference>
<dbReference type="RefSeq" id="XP_006507645.1">
    <property type="nucleotide sequence ID" value="XM_006507582.3"/>
</dbReference>
<dbReference type="SMR" id="P51163"/>
<dbReference type="BioGRID" id="204462">
    <property type="interactions" value="1"/>
</dbReference>
<dbReference type="FunCoup" id="P51163">
    <property type="interactions" value="1397"/>
</dbReference>
<dbReference type="STRING" id="10090.ENSMUSP00000033276"/>
<dbReference type="GlyGen" id="P51163">
    <property type="glycosylation" value="1 site"/>
</dbReference>
<dbReference type="iPTMnet" id="P51163"/>
<dbReference type="PhosphoSitePlus" id="P51163"/>
<dbReference type="jPOST" id="P51163"/>
<dbReference type="PaxDb" id="10090-ENSMUSP00000033276"/>
<dbReference type="PeptideAtlas" id="P51163"/>
<dbReference type="ProteomicsDB" id="269695"/>
<dbReference type="Pumba" id="P51163"/>
<dbReference type="Antibodypedia" id="32416">
    <property type="antibodies" value="102 antibodies from 21 providers"/>
</dbReference>
<dbReference type="DNASU" id="22276"/>
<dbReference type="Ensembl" id="ENSMUST00000033276.11">
    <property type="protein sequence ID" value="ENSMUSP00000033276.5"/>
    <property type="gene ID" value="ENSMUSG00000030979.14"/>
</dbReference>
<dbReference type="Ensembl" id="ENSMUST00000106145.10">
    <property type="protein sequence ID" value="ENSMUSP00000101751.4"/>
    <property type="gene ID" value="ENSMUSG00000030979.14"/>
</dbReference>
<dbReference type="Ensembl" id="ENSMUST00000106146.8">
    <property type="protein sequence ID" value="ENSMUSP00000101752.2"/>
    <property type="gene ID" value="ENSMUSG00000030979.14"/>
</dbReference>
<dbReference type="GeneID" id="22276"/>
<dbReference type="KEGG" id="mmu:22276"/>
<dbReference type="UCSC" id="uc009kdf.2">
    <property type="organism name" value="mouse"/>
</dbReference>
<dbReference type="AGR" id="MGI:98917"/>
<dbReference type="CTD" id="7390"/>
<dbReference type="MGI" id="MGI:98917">
    <property type="gene designation" value="Uros"/>
</dbReference>
<dbReference type="VEuPathDB" id="HostDB:ENSMUSG00000030979"/>
<dbReference type="eggNOG" id="KOG4132">
    <property type="taxonomic scope" value="Eukaryota"/>
</dbReference>
<dbReference type="GeneTree" id="ENSGT00390000009853"/>
<dbReference type="HOGENOM" id="CLU_051874_1_1_1"/>
<dbReference type="InParanoid" id="P51163"/>
<dbReference type="OMA" id="IHGADTG"/>
<dbReference type="OrthoDB" id="5595751at2759"/>
<dbReference type="PhylomeDB" id="P51163"/>
<dbReference type="TreeFam" id="TF324092"/>
<dbReference type="BRENDA" id="4.2.1.75">
    <property type="organism ID" value="3474"/>
</dbReference>
<dbReference type="Reactome" id="R-MMU-189451">
    <property type="pathway name" value="Heme biosynthesis"/>
</dbReference>
<dbReference type="UniPathway" id="UPA00251">
    <property type="reaction ID" value="UER00320"/>
</dbReference>
<dbReference type="BioGRID-ORCS" id="22276">
    <property type="hits" value="18 hits in 77 CRISPR screens"/>
</dbReference>
<dbReference type="ChiTaRS" id="Uros">
    <property type="organism name" value="mouse"/>
</dbReference>
<dbReference type="PRO" id="PR:P51163"/>
<dbReference type="Proteomes" id="UP000000589">
    <property type="component" value="Chromosome 7"/>
</dbReference>
<dbReference type="RNAct" id="P51163">
    <property type="molecule type" value="protein"/>
</dbReference>
<dbReference type="Bgee" id="ENSMUSG00000030979">
    <property type="expression patterns" value="Expressed in fetal liver hematopoietic progenitor cell and 273 other cell types or tissues"/>
</dbReference>
<dbReference type="ExpressionAtlas" id="P51163">
    <property type="expression patterns" value="baseline and differential"/>
</dbReference>
<dbReference type="GO" id="GO:0005829">
    <property type="term" value="C:cytosol"/>
    <property type="evidence" value="ECO:0000314"/>
    <property type="project" value="MGI"/>
</dbReference>
<dbReference type="GO" id="GO:0005739">
    <property type="term" value="C:mitochondrion"/>
    <property type="evidence" value="ECO:0007005"/>
    <property type="project" value="MGI"/>
</dbReference>
<dbReference type="GO" id="GO:0005542">
    <property type="term" value="F:folic acid binding"/>
    <property type="evidence" value="ECO:0007669"/>
    <property type="project" value="Ensembl"/>
</dbReference>
<dbReference type="GO" id="GO:0004852">
    <property type="term" value="F:uroporphyrinogen-III synthase activity"/>
    <property type="evidence" value="ECO:0000314"/>
    <property type="project" value="MGI"/>
</dbReference>
<dbReference type="GO" id="GO:0071418">
    <property type="term" value="P:cellular response to amine stimulus"/>
    <property type="evidence" value="ECO:0007669"/>
    <property type="project" value="Ensembl"/>
</dbReference>
<dbReference type="GO" id="GO:0071243">
    <property type="term" value="P:cellular response to arsenic-containing substance"/>
    <property type="evidence" value="ECO:0007669"/>
    <property type="project" value="Ensembl"/>
</dbReference>
<dbReference type="GO" id="GO:0006784">
    <property type="term" value="P:heme A biosynthetic process"/>
    <property type="evidence" value="ECO:0000315"/>
    <property type="project" value="MGI"/>
</dbReference>
<dbReference type="GO" id="GO:0006785">
    <property type="term" value="P:heme B biosynthetic process"/>
    <property type="evidence" value="ECO:0000315"/>
    <property type="project" value="MGI"/>
</dbReference>
<dbReference type="GO" id="GO:0048034">
    <property type="term" value="P:heme O biosynthetic process"/>
    <property type="evidence" value="ECO:0000315"/>
    <property type="project" value="MGI"/>
</dbReference>
<dbReference type="GO" id="GO:0006779">
    <property type="term" value="P:porphyrin-containing compound biosynthetic process"/>
    <property type="evidence" value="ECO:0000314"/>
    <property type="project" value="MGI"/>
</dbReference>
<dbReference type="GO" id="GO:0006782">
    <property type="term" value="P:protoporphyrinogen IX biosynthetic process"/>
    <property type="evidence" value="ECO:0007669"/>
    <property type="project" value="UniProtKB-UniPathway"/>
</dbReference>
<dbReference type="GO" id="GO:0070541">
    <property type="term" value="P:response to platinum ion"/>
    <property type="evidence" value="ECO:0007669"/>
    <property type="project" value="Ensembl"/>
</dbReference>
<dbReference type="GO" id="GO:0006780">
    <property type="term" value="P:uroporphyrinogen III biosynthetic process"/>
    <property type="evidence" value="ECO:0007669"/>
    <property type="project" value="Ensembl"/>
</dbReference>
<dbReference type="CDD" id="cd06578">
    <property type="entry name" value="HemD"/>
    <property type="match status" value="1"/>
</dbReference>
<dbReference type="FunFam" id="3.40.50.10090:FF:000003">
    <property type="entry name" value="uroporphyrinogen-III synthase"/>
    <property type="match status" value="1"/>
</dbReference>
<dbReference type="Gene3D" id="3.40.50.10090">
    <property type="match status" value="2"/>
</dbReference>
<dbReference type="InterPro" id="IPR036108">
    <property type="entry name" value="4pyrrol_syn_uPrphyn_synt_sf"/>
</dbReference>
<dbReference type="InterPro" id="IPR003754">
    <property type="entry name" value="4pyrrol_synth_uPrphyn_synth"/>
</dbReference>
<dbReference type="InterPro" id="IPR039793">
    <property type="entry name" value="UROS/Hem4"/>
</dbReference>
<dbReference type="PANTHER" id="PTHR12390">
    <property type="entry name" value="UROPORPHYRINOGEN III SYNTHASE"/>
    <property type="match status" value="1"/>
</dbReference>
<dbReference type="PANTHER" id="PTHR12390:SF0">
    <property type="entry name" value="UROPORPHYRINOGEN-III SYNTHASE"/>
    <property type="match status" value="1"/>
</dbReference>
<dbReference type="Pfam" id="PF02602">
    <property type="entry name" value="HEM4"/>
    <property type="match status" value="1"/>
</dbReference>
<dbReference type="SUPFAM" id="SSF69618">
    <property type="entry name" value="HemD-like"/>
    <property type="match status" value="1"/>
</dbReference>
<accession>P51163</accession>
<name>HEM4_MOUSE</name>
<feature type="chain" id="PRO_0000135252" description="Uroporphyrinogen-III synthase">
    <location>
        <begin position="1"/>
        <end position="265"/>
    </location>
</feature>
<feature type="mutagenesis site" description="Enhanced protein degradation that can be rescued by proteasome Inhibitors." evidence="2">
    <original>C</original>
    <variation>R</variation>
    <location>
        <position position="73"/>
    </location>
</feature>
<feature type="mutagenesis site" description="Enhanced protein degradation that can be rescued by proteasome Inhibitors." evidence="2">
    <original>P</original>
    <variation>Q</variation>
    <location>
        <position position="248"/>
    </location>
</feature>
<protein>
    <recommendedName>
        <fullName>Uroporphyrinogen-III synthase</fullName>
        <shortName>UROIIIS</shortName>
        <shortName>UROS</shortName>
        <ecNumber evidence="5">4.2.1.75</ecNumber>
    </recommendedName>
    <alternativeName>
        <fullName>Hydroxymethylbilane hydrolyase [cyclizing]</fullName>
    </alternativeName>
    <alternativeName>
        <fullName>Uroporphyrinogen-III cosynthase</fullName>
    </alternativeName>
</protein>
<keyword id="KW-0963">Cytoplasm</keyword>
<keyword id="KW-0350">Heme biosynthesis</keyword>
<keyword id="KW-0456">Lyase</keyword>
<keyword id="KW-0627">Porphyrin biosynthesis</keyword>
<keyword id="KW-1185">Reference proteome</keyword>
<gene>
    <name type="primary">Uros</name>
    <name type="synonym">Uros3</name>
</gene>
<proteinExistence type="evidence at protein level"/>